<sequence length="171" mass="19698">MDKKSLYKYLLLRSTGDMHKAKSPTIMTRVTNNVYLGNYKNAMDAPSSEVKFKYVLNLTMDKYTLPNSNINIIHIPLVDDTTTDISKYFDDVTAFLSKCDQRNEPVLVHCAAGVNRSGAMILAYLMSKNKESLPMLYFLYVYHSMRDLRGAFVENPSFKRQIIEKYVIDKN</sequence>
<name>DUSP_VACCW</name>
<dbReference type="EC" id="3.1.3.-"/>
<dbReference type="EC" id="3.1.3.48" evidence="4"/>
<dbReference type="EMBL" id="M13209">
    <property type="protein sequence ID" value="AAB59836.1"/>
    <property type="molecule type" value="Genomic_DNA"/>
</dbReference>
<dbReference type="EMBL" id="AY243312">
    <property type="protein sequence ID" value="AAO89378.1"/>
    <property type="molecule type" value="Genomic_DNA"/>
</dbReference>
<dbReference type="PIR" id="A24481">
    <property type="entry name" value="QQVZH1"/>
</dbReference>
<dbReference type="PDB" id="2Q05">
    <property type="method" value="X-ray"/>
    <property type="resolution" value="2.57 A"/>
    <property type="chains" value="A/B/C/D=1-171"/>
</dbReference>
<dbReference type="PDB" id="2RF6">
    <property type="method" value="X-ray"/>
    <property type="resolution" value="1.95 A"/>
    <property type="chains" value="A=1-171"/>
</dbReference>
<dbReference type="PDB" id="3CM3">
    <property type="method" value="X-ray"/>
    <property type="resolution" value="1.32 A"/>
    <property type="chains" value="A=1-171"/>
</dbReference>
<dbReference type="PDBsum" id="2Q05"/>
<dbReference type="PDBsum" id="2RF6"/>
<dbReference type="PDBsum" id="3CM3"/>
<dbReference type="SMR" id="P07239"/>
<dbReference type="IntAct" id="P07239">
    <property type="interactions" value="1"/>
</dbReference>
<dbReference type="MINT" id="P07239"/>
<dbReference type="KEGG" id="vg:3707555"/>
<dbReference type="SABIO-RK" id="P07239"/>
<dbReference type="EvolutionaryTrace" id="P07239"/>
<dbReference type="Proteomes" id="UP000000344">
    <property type="component" value="Genome"/>
</dbReference>
<dbReference type="GO" id="GO:0005737">
    <property type="term" value="C:cytoplasm"/>
    <property type="evidence" value="ECO:0000305"/>
    <property type="project" value="UniProt"/>
</dbReference>
<dbReference type="GO" id="GO:0030430">
    <property type="term" value="C:host cell cytoplasm"/>
    <property type="evidence" value="ECO:0007669"/>
    <property type="project" value="UniProtKB-SubCell"/>
</dbReference>
<dbReference type="GO" id="GO:0044423">
    <property type="term" value="C:virion component"/>
    <property type="evidence" value="ECO:0007669"/>
    <property type="project" value="UniProtKB-KW"/>
</dbReference>
<dbReference type="GO" id="GO:0016791">
    <property type="term" value="F:phosphatase activity"/>
    <property type="evidence" value="ECO:0000314"/>
    <property type="project" value="UniProt"/>
</dbReference>
<dbReference type="GO" id="GO:0004722">
    <property type="term" value="F:protein serine/threonine phosphatase activity"/>
    <property type="evidence" value="ECO:0007669"/>
    <property type="project" value="RHEA"/>
</dbReference>
<dbReference type="GO" id="GO:0004725">
    <property type="term" value="F:protein tyrosine phosphatase activity"/>
    <property type="evidence" value="ECO:0007669"/>
    <property type="project" value="UniProtKB-EC"/>
</dbReference>
<dbReference type="GO" id="GO:0052170">
    <property type="term" value="P:symbiont-mediated suppression of host innate immune response"/>
    <property type="evidence" value="ECO:0007669"/>
    <property type="project" value="UniProtKB-KW"/>
</dbReference>
<dbReference type="GO" id="GO:0039563">
    <property type="term" value="P:symbiont-mediated suppression of host JAK-STAT cascade via inhibition of STAT1 activity"/>
    <property type="evidence" value="ECO:0007669"/>
    <property type="project" value="UniProtKB-KW"/>
</dbReference>
<dbReference type="GO" id="GO:0039502">
    <property type="term" value="P:symbiont-mediated suppression of host type I interferon-mediated signaling pathway"/>
    <property type="evidence" value="ECO:0000314"/>
    <property type="project" value="UniProt"/>
</dbReference>
<dbReference type="CDD" id="cd14498">
    <property type="entry name" value="DSP"/>
    <property type="match status" value="1"/>
</dbReference>
<dbReference type="Gene3D" id="3.90.190.10">
    <property type="entry name" value="Protein tyrosine phosphatase superfamily"/>
    <property type="match status" value="1"/>
</dbReference>
<dbReference type="InterPro" id="IPR000340">
    <property type="entry name" value="Dual-sp_phosphatase_cat-dom"/>
</dbReference>
<dbReference type="InterPro" id="IPR052103">
    <property type="entry name" value="Dual_spec_Phospatases"/>
</dbReference>
<dbReference type="InterPro" id="IPR029021">
    <property type="entry name" value="Prot-tyrosine_phosphatase-like"/>
</dbReference>
<dbReference type="InterPro" id="IPR016130">
    <property type="entry name" value="Tyr_Pase_AS"/>
</dbReference>
<dbReference type="InterPro" id="IPR003595">
    <property type="entry name" value="Tyr_Pase_cat"/>
</dbReference>
<dbReference type="InterPro" id="IPR000387">
    <property type="entry name" value="Tyr_Pase_dom"/>
</dbReference>
<dbReference type="InterPro" id="IPR020422">
    <property type="entry name" value="TYR_PHOSPHATASE_DUAL_dom"/>
</dbReference>
<dbReference type="PANTHER" id="PTHR45961">
    <property type="entry name" value="IP21249P"/>
    <property type="match status" value="1"/>
</dbReference>
<dbReference type="PANTHER" id="PTHR45961:SF6">
    <property type="entry name" value="IP21249P"/>
    <property type="match status" value="1"/>
</dbReference>
<dbReference type="Pfam" id="PF00782">
    <property type="entry name" value="DSPc"/>
    <property type="match status" value="1"/>
</dbReference>
<dbReference type="SMART" id="SM00195">
    <property type="entry name" value="DSPc"/>
    <property type="match status" value="1"/>
</dbReference>
<dbReference type="SMART" id="SM00404">
    <property type="entry name" value="PTPc_motif"/>
    <property type="match status" value="1"/>
</dbReference>
<dbReference type="SUPFAM" id="SSF52799">
    <property type="entry name" value="(Phosphotyrosine protein) phosphatases II"/>
    <property type="match status" value="1"/>
</dbReference>
<dbReference type="PROSITE" id="PS00383">
    <property type="entry name" value="TYR_PHOSPHATASE_1"/>
    <property type="match status" value="1"/>
</dbReference>
<dbReference type="PROSITE" id="PS50056">
    <property type="entry name" value="TYR_PHOSPHATASE_2"/>
    <property type="match status" value="1"/>
</dbReference>
<dbReference type="PROSITE" id="PS50054">
    <property type="entry name" value="TYR_PHOSPHATASE_DUAL"/>
    <property type="match status" value="1"/>
</dbReference>
<organismHost>
    <name type="scientific">Bos taurus</name>
    <name type="common">Bovine</name>
    <dbReference type="NCBI Taxonomy" id="9913"/>
</organismHost>
<proteinExistence type="evidence at protein level"/>
<evidence type="ECO:0000255" key="1">
    <source>
        <dbReference type="PROSITE-ProRule" id="PRU00160"/>
    </source>
</evidence>
<evidence type="ECO:0000269" key="2">
    <source>
    </source>
</evidence>
<evidence type="ECO:0000269" key="3">
    <source>
    </source>
</evidence>
<evidence type="ECO:0000269" key="4">
    <source>
    </source>
</evidence>
<evidence type="ECO:0000269" key="5">
    <source>
    </source>
</evidence>
<evidence type="ECO:0000269" key="6">
    <source>
    </source>
</evidence>
<evidence type="ECO:0000305" key="7"/>
<evidence type="ECO:0007829" key="8">
    <source>
        <dbReference type="PDB" id="3CM3"/>
    </source>
</evidence>
<organism>
    <name type="scientific">Vaccinia virus (strain Western Reserve)</name>
    <name type="common">VACV</name>
    <name type="synonym">Vaccinia virus (strain WR)</name>
    <dbReference type="NCBI Taxonomy" id="10254"/>
    <lineage>
        <taxon>Viruses</taxon>
        <taxon>Varidnaviria</taxon>
        <taxon>Bamfordvirae</taxon>
        <taxon>Nucleocytoviricota</taxon>
        <taxon>Pokkesviricetes</taxon>
        <taxon>Chitovirales</taxon>
        <taxon>Poxviridae</taxon>
        <taxon>Chordopoxvirinae</taxon>
        <taxon>Orthopoxvirus</taxon>
        <taxon>Vaccinia virus</taxon>
    </lineage>
</organism>
<gene>
    <name type="primary">OPG106</name>
    <name type="ORF">H1L</name>
</gene>
<keyword id="KW-0002">3D-structure</keyword>
<keyword id="KW-1035">Host cytoplasm</keyword>
<keyword id="KW-0945">Host-virus interaction</keyword>
<keyword id="KW-0378">Hydrolase</keyword>
<keyword id="KW-1090">Inhibition of host innate immune response by virus</keyword>
<keyword id="KW-1114">Inhibition of host interferon signaling pathway by virus</keyword>
<keyword id="KW-1105">Inhibition of host STAT1 by virus</keyword>
<keyword id="KW-0922">Interferon antiviral system evasion</keyword>
<keyword id="KW-0426">Late protein</keyword>
<keyword id="KW-0904">Protein phosphatase</keyword>
<keyword id="KW-1185">Reference proteome</keyword>
<keyword id="KW-0899">Viral immunoevasion</keyword>
<keyword id="KW-0946">Virion</keyword>
<accession>P07239</accession>
<accession>Q80HW5</accession>
<comment type="function">
    <text evidence="2 3 4 5 6">Serine/tyrosine phosphatase which down-regulates cellular antiviral response by dephosphorylating activated host STAT1 and blocking interferon (IFN)-stimulated innate immune responses. Dephosphorylates the OPG144 protein.</text>
</comment>
<comment type="catalytic activity">
    <reaction evidence="4">
        <text>O-phospho-L-tyrosyl-[protein] + H2O = L-tyrosyl-[protein] + phosphate</text>
        <dbReference type="Rhea" id="RHEA:10684"/>
        <dbReference type="Rhea" id="RHEA-COMP:10136"/>
        <dbReference type="Rhea" id="RHEA-COMP:20101"/>
        <dbReference type="ChEBI" id="CHEBI:15377"/>
        <dbReference type="ChEBI" id="CHEBI:43474"/>
        <dbReference type="ChEBI" id="CHEBI:46858"/>
        <dbReference type="ChEBI" id="CHEBI:61978"/>
        <dbReference type="EC" id="3.1.3.48"/>
    </reaction>
</comment>
<comment type="catalytic activity">
    <reaction>
        <text>O-phospho-L-seryl-[protein] + H2O = L-seryl-[protein] + phosphate</text>
        <dbReference type="Rhea" id="RHEA:20629"/>
        <dbReference type="Rhea" id="RHEA-COMP:9863"/>
        <dbReference type="Rhea" id="RHEA-COMP:11604"/>
        <dbReference type="ChEBI" id="CHEBI:15377"/>
        <dbReference type="ChEBI" id="CHEBI:29999"/>
        <dbReference type="ChEBI" id="CHEBI:43474"/>
        <dbReference type="ChEBI" id="CHEBI:83421"/>
    </reaction>
</comment>
<comment type="biophysicochemical properties">
    <kinetics>
        <KM evidence="6">87 uM for 3-O-methylfluorescein phosphate</KM>
    </kinetics>
</comment>
<comment type="subunit">
    <text evidence="6">Homodimer.</text>
</comment>
<comment type="interaction">
    <interactant intactId="EBI-7789600">
        <id>P07239</id>
    </interactant>
    <interactant intactId="EBI-1057697">
        <id>P42224</id>
        <label>STAT1</label>
    </interactant>
    <organismsDiffer>true</organismsDiffer>
    <experiments>2</experiments>
</comment>
<comment type="subcellular location">
    <subcellularLocation>
        <location evidence="6">Virion</location>
    </subcellularLocation>
    <subcellularLocation>
        <location evidence="6">Host cytoplasm</location>
    </subcellularLocation>
    <text>Approximately 200 molecules of OPG106 are packaged within the virion and are essential for the viability of the virus.</text>
</comment>
<comment type="induction">
    <text evidence="5">Expressed in the late phase of the viral replicative cycle.</text>
</comment>
<comment type="similarity">
    <text evidence="7">Belongs to the protein-tyrosine phosphatase family. Non-receptor class dual specificity subfamily.</text>
</comment>
<protein>
    <recommendedName>
        <fullName>Dual specificity protein phosphatase OPG106</fullName>
        <ecNumber>3.1.3.-</ecNumber>
        <ecNumber evidence="4">3.1.3.48</ecNumber>
    </recommendedName>
    <alternativeName>
        <fullName>Dual specificity protein phosphatase H1L</fullName>
    </alternativeName>
    <alternativeName>
        <fullName>Late protein H1</fullName>
    </alternativeName>
</protein>
<feature type="chain" id="PRO_0000094868" description="Dual specificity protein phosphatase OPG106">
    <location>
        <begin position="1"/>
        <end position="171"/>
    </location>
</feature>
<feature type="domain" description="Tyrosine-protein phosphatase" evidence="1">
    <location>
        <begin position="23"/>
        <end position="171"/>
    </location>
</feature>
<feature type="region of interest" description="Dimerization">
    <location>
        <begin position="1"/>
        <end position="27"/>
    </location>
</feature>
<feature type="active site" description="Phosphocysteine intermediate" evidence="1 4">
    <location>
        <position position="110"/>
    </location>
</feature>
<feature type="mutagenesis site" description="Loss of activity." evidence="4">
    <original>C</original>
    <variation>S</variation>
    <location>
        <position position="110"/>
    </location>
</feature>
<feature type="sequence conflict" description="In Ref. 3; AAO89378." evidence="7" ref="3">
    <original>K</original>
    <variation>R</variation>
    <location>
        <position position="20"/>
    </location>
</feature>
<feature type="helix" evidence="8">
    <location>
        <begin position="6"/>
        <end position="14"/>
    </location>
</feature>
<feature type="strand" evidence="8">
    <location>
        <begin position="31"/>
        <end position="37"/>
    </location>
</feature>
<feature type="helix" evidence="8">
    <location>
        <begin position="39"/>
        <end position="43"/>
    </location>
</feature>
<feature type="helix" evidence="8">
    <location>
        <begin position="45"/>
        <end position="47"/>
    </location>
</feature>
<feature type="strand" evidence="8">
    <location>
        <begin position="48"/>
        <end position="50"/>
    </location>
</feature>
<feature type="strand" evidence="8">
    <location>
        <begin position="53"/>
        <end position="57"/>
    </location>
</feature>
<feature type="strand" evidence="8">
    <location>
        <begin position="59"/>
        <end position="61"/>
    </location>
</feature>
<feature type="strand" evidence="8">
    <location>
        <begin position="71"/>
        <end position="74"/>
    </location>
</feature>
<feature type="strand" evidence="8">
    <location>
        <begin position="80"/>
        <end position="82"/>
    </location>
</feature>
<feature type="helix" evidence="8">
    <location>
        <begin position="86"/>
        <end position="88"/>
    </location>
</feature>
<feature type="helix" evidence="8">
    <location>
        <begin position="89"/>
        <end position="102"/>
    </location>
</feature>
<feature type="strand" evidence="8">
    <location>
        <begin position="106"/>
        <end position="109"/>
    </location>
</feature>
<feature type="strand" evidence="8">
    <location>
        <begin position="111"/>
        <end position="115"/>
    </location>
</feature>
<feature type="helix" evidence="8">
    <location>
        <begin position="116"/>
        <end position="128"/>
    </location>
</feature>
<feature type="helix" evidence="8">
    <location>
        <begin position="134"/>
        <end position="149"/>
    </location>
</feature>
<feature type="helix" evidence="8">
    <location>
        <begin position="156"/>
        <end position="166"/>
    </location>
</feature>
<reference key="1">
    <citation type="journal article" date="1986" name="Proc. Natl. Acad. Sci. U.S.A.">
        <title>Homology between RNA polymerases of poxviruses, prokaryotes, and eukaryotes: nucleotide sequence and transcriptional analysis of vaccinia virus genes encoding 147-kDa and 22-kDa subunits.</title>
        <authorList>
            <person name="Broyles S.S."/>
            <person name="Moss B."/>
        </authorList>
    </citation>
    <scope>NUCLEOTIDE SEQUENCE [GENOMIC DNA]</scope>
</reference>
<reference key="2">
    <citation type="journal article" date="1986" name="J. Virol.">
        <title>Conserved TAAATG sequence at the transcriptional and translational initiation sites of vaccinia virus late genes deduced by structural and functional analysis of the HindIII H genome fragment.</title>
        <authorList>
            <person name="Rosel J.L."/>
            <person name="Earl P.L."/>
            <person name="Weir J.P."/>
            <person name="Moss B."/>
        </authorList>
    </citation>
    <scope>NUCLEOTIDE SEQUENCE [GENOMIC DNA]</scope>
</reference>
<reference key="3">
    <citation type="submission" date="2003-02" db="EMBL/GenBank/DDBJ databases">
        <title>Sequencing of the coding region of Vaccinia-WR to an average 9-fold redundancy and an error rate of 0.16/10kb.</title>
        <authorList>
            <person name="Esposito J.J."/>
            <person name="Frace A.M."/>
            <person name="Sammons S.A."/>
            <person name="Olsen-Rasmussen M."/>
            <person name="Osborne J."/>
            <person name="Wohlhueter R."/>
        </authorList>
    </citation>
    <scope>NUCLEOTIDE SEQUENCE [LARGE SCALE GENOMIC DNA]</scope>
</reference>
<reference key="4">
    <citation type="journal article" date="1991" name="Nature">
        <title>A Tyr/Ser protein phosphatase encoded by vaccinia virus.</title>
        <authorList>
            <person name="Guan K."/>
            <person name="Broyels S.S."/>
            <person name="Dixon J.E."/>
        </authorList>
    </citation>
    <scope>FUNCTION</scope>
    <scope>ACTIVE SITE</scope>
    <scope>MUTAGENESIS OF CYS-110</scope>
    <scope>CATALYTIC ACTIVITY</scope>
</reference>
<reference key="5">
    <citation type="journal article" date="1999" name="J. Virol.">
        <title>Tyrosine phosphorylation of A17 during vaccinia virus infection: involvement of the H1 phosphatase and the F10 kinase.</title>
        <authorList>
            <person name="Derrien M."/>
            <person name="Punjabi A."/>
            <person name="Khanna M."/>
            <person name="Grubisha O."/>
            <person name="Traktman P."/>
        </authorList>
    </citation>
    <scope>FUNCTION</scope>
    <scope>DEPHOSPHORYLATION OF OPG144</scope>
</reference>
<reference key="6">
    <citation type="journal article" date="2001" name="J. Virol.">
        <title>Vaccinia virus blocks gamma interferon signal transduction: viral VH1 phosphatase reverses Stat1 activation.</title>
        <authorList>
            <person name="Najarro P."/>
            <person name="Traktman P."/>
            <person name="Lewis J.A."/>
        </authorList>
    </citation>
    <scope>FUNCTION</scope>
</reference>
<reference key="7">
    <citation type="journal article" date="2008" name="J. Interferon Cytokine Res.">
        <title>Vaccinia virus blocks Stat1-dependent and Stat1-independent gene expression induced by type I and type II interferons.</title>
        <authorList>
            <person name="Mann B.A."/>
            <person name="Huang J.H."/>
            <person name="Li P."/>
            <person name="Chang H.C."/>
            <person name="Slee R.B."/>
            <person name="O'Sullivan A."/>
            <person name="Anita M."/>
            <person name="Yeh N."/>
            <person name="Klemsz M.J."/>
            <person name="Brutkiewicz R.R."/>
            <person name="Blum J.S."/>
            <person name="Kaplan M.H."/>
        </authorList>
    </citation>
    <scope>FUNCTION</scope>
    <scope>INDUCTION</scope>
</reference>
<reference key="8">
    <citation type="journal article" date="2011" name="J. Biol. Chem.">
        <title>Dimerization of Vaccinia virus VH1 is essential for dephosphorylation of STAT1 at tyrosine 701.</title>
        <authorList>
            <person name="Koksal A.C."/>
            <person name="Cingolani G."/>
        </authorList>
    </citation>
    <scope>FUNCTION</scope>
    <scope>SUBUNIT</scope>
    <scope>BIOPHYSICOCHEMICAL PROPERTIES</scope>
    <scope>SUBCELLULAR LOCATION</scope>
</reference>
<reference key="9">
    <citation type="journal article" date="2009" name="J. Biol. Chem.">
        <title>Dimeric quaternary structure of the prototypical dual specificity phosphatase VH1.</title>
        <authorList>
            <person name="Koksal A.C."/>
            <person name="Nardozzi J.D."/>
            <person name="Cingolani G."/>
        </authorList>
    </citation>
    <scope>X-RAY CRYSTALLOGRAPHY (1.32 ANGSTROMS)</scope>
</reference>